<sequence length="546" mass="63239">MTPGEVRRLYFIIRTFLSYGLDELIPRMRLTLPLRLWRYSLFWMPNRHKDKLLGERLRLALQELGPVWIKFGQMLSTRRDLFPPQIADQLALLQDKVAPFDGRLAKAQIEEAMGGLPVEAWFDDFDIQPLASASIAQVHTARLKSNGKEVVIKVIRPDILPVIQADLKLIYRLARWVPRLLPDGRRLRPTEVVREYEKTLIDELNLLRESANAIQLRRNFENSPMLYIPEVYSDYCSQNMMVMERIYGIPVSDVAALEKNGTNMKLLAERGVKVFFTQVFRDSFFHADMHPGNIFVSHEHPENPQYIGIDCGIVGSLNKEDKRYLAENFIAFFNRDYRKVAELHVDSGWVPPDTNVEDFEFAIRTVCEPIFEKPLAEISFGHVLLNLFNTARRFNMEVQPQLVLLQKTLLYVEGVGRQLYPQLDLWKTAKPFLESWIKDQVGIPALTRALKEKAPFWVEKMPEIPELVYDSLRQGKYLQHSVDKIARELQVNHVRQSQSRYLLGIGATLLLSGSFLLVNRPEWGLMPGWLMVGGVVVWLVGWRKTR</sequence>
<gene>
    <name evidence="1" type="primary">ubiB</name>
    <name type="ordered locus">SNSL254_A4252</name>
</gene>
<comment type="function">
    <text evidence="1">Is probably a protein kinase regulator of UbiI activity which is involved in aerobic coenzyme Q (ubiquinone) biosynthesis.</text>
</comment>
<comment type="pathway">
    <text>Cofactor biosynthesis; ubiquinone biosynthesis [regulation].</text>
</comment>
<comment type="subcellular location">
    <subcellularLocation>
        <location evidence="1">Cell inner membrane</location>
        <topology evidence="1">Multi-pass membrane protein</topology>
    </subcellularLocation>
</comment>
<comment type="similarity">
    <text evidence="1">Belongs to the ABC1 family. UbiB subfamily.</text>
</comment>
<organism>
    <name type="scientific">Salmonella newport (strain SL254)</name>
    <dbReference type="NCBI Taxonomy" id="423368"/>
    <lineage>
        <taxon>Bacteria</taxon>
        <taxon>Pseudomonadati</taxon>
        <taxon>Pseudomonadota</taxon>
        <taxon>Gammaproteobacteria</taxon>
        <taxon>Enterobacterales</taxon>
        <taxon>Enterobacteriaceae</taxon>
        <taxon>Salmonella</taxon>
    </lineage>
</organism>
<reference key="1">
    <citation type="journal article" date="2011" name="J. Bacteriol.">
        <title>Comparative genomics of 28 Salmonella enterica isolates: evidence for CRISPR-mediated adaptive sublineage evolution.</title>
        <authorList>
            <person name="Fricke W.F."/>
            <person name="Mammel M.K."/>
            <person name="McDermott P.F."/>
            <person name="Tartera C."/>
            <person name="White D.G."/>
            <person name="Leclerc J.E."/>
            <person name="Ravel J."/>
            <person name="Cebula T.A."/>
        </authorList>
    </citation>
    <scope>NUCLEOTIDE SEQUENCE [LARGE SCALE GENOMIC DNA]</scope>
    <source>
        <strain>SL254</strain>
    </source>
</reference>
<keyword id="KW-0067">ATP-binding</keyword>
<keyword id="KW-0997">Cell inner membrane</keyword>
<keyword id="KW-1003">Cell membrane</keyword>
<keyword id="KW-0418">Kinase</keyword>
<keyword id="KW-0472">Membrane</keyword>
<keyword id="KW-0547">Nucleotide-binding</keyword>
<keyword id="KW-0808">Transferase</keyword>
<keyword id="KW-0812">Transmembrane</keyword>
<keyword id="KW-1133">Transmembrane helix</keyword>
<keyword id="KW-0831">Ubiquinone biosynthesis</keyword>
<protein>
    <recommendedName>
        <fullName evidence="1">Probable protein kinase UbiB</fullName>
        <ecNumber evidence="1">2.7.-.-</ecNumber>
    </recommendedName>
    <alternativeName>
        <fullName evidence="1">Ubiquinone biosynthesis protein UbiB</fullName>
    </alternativeName>
</protein>
<feature type="chain" id="PRO_1000123921" description="Probable protein kinase UbiB">
    <location>
        <begin position="1"/>
        <end position="546"/>
    </location>
</feature>
<feature type="transmembrane region" description="Helical" evidence="1">
    <location>
        <begin position="501"/>
        <end position="521"/>
    </location>
</feature>
<feature type="transmembrane region" description="Helical" evidence="1">
    <location>
        <begin position="522"/>
        <end position="542"/>
    </location>
</feature>
<feature type="domain" description="Protein kinase" evidence="1">
    <location>
        <begin position="124"/>
        <end position="502"/>
    </location>
</feature>
<feature type="active site" description="Proton acceptor" evidence="1">
    <location>
        <position position="288"/>
    </location>
</feature>
<feature type="binding site" evidence="1">
    <location>
        <begin position="130"/>
        <end position="138"/>
    </location>
    <ligand>
        <name>ATP</name>
        <dbReference type="ChEBI" id="CHEBI:30616"/>
    </ligand>
</feature>
<feature type="binding site" evidence="1">
    <location>
        <position position="153"/>
    </location>
    <ligand>
        <name>ATP</name>
        <dbReference type="ChEBI" id="CHEBI:30616"/>
    </ligand>
</feature>
<proteinExistence type="inferred from homology"/>
<accession>B4SZ75</accession>
<name>UBIB_SALNS</name>
<evidence type="ECO:0000255" key="1">
    <source>
        <dbReference type="HAMAP-Rule" id="MF_00414"/>
    </source>
</evidence>
<dbReference type="EC" id="2.7.-.-" evidence="1"/>
<dbReference type="EMBL" id="CP001113">
    <property type="protein sequence ID" value="ACF65324.1"/>
    <property type="molecule type" value="Genomic_DNA"/>
</dbReference>
<dbReference type="RefSeq" id="WP_000187559.1">
    <property type="nucleotide sequence ID" value="NZ_CCMR01000001.1"/>
</dbReference>
<dbReference type="SMR" id="B4SZ75"/>
<dbReference type="KEGG" id="see:SNSL254_A4252"/>
<dbReference type="HOGENOM" id="CLU_006533_0_0_6"/>
<dbReference type="UniPathway" id="UPA00232"/>
<dbReference type="Proteomes" id="UP000008824">
    <property type="component" value="Chromosome"/>
</dbReference>
<dbReference type="GO" id="GO:0005886">
    <property type="term" value="C:plasma membrane"/>
    <property type="evidence" value="ECO:0007669"/>
    <property type="project" value="UniProtKB-SubCell"/>
</dbReference>
<dbReference type="GO" id="GO:0005524">
    <property type="term" value="F:ATP binding"/>
    <property type="evidence" value="ECO:0007669"/>
    <property type="project" value="UniProtKB-KW"/>
</dbReference>
<dbReference type="GO" id="GO:0004672">
    <property type="term" value="F:protein kinase activity"/>
    <property type="evidence" value="ECO:0007669"/>
    <property type="project" value="UniProtKB-UniRule"/>
</dbReference>
<dbReference type="GO" id="GO:0010795">
    <property type="term" value="P:regulation of ubiquinone biosynthetic process"/>
    <property type="evidence" value="ECO:0007669"/>
    <property type="project" value="UniProtKB-UniRule"/>
</dbReference>
<dbReference type="GO" id="GO:0006744">
    <property type="term" value="P:ubiquinone biosynthetic process"/>
    <property type="evidence" value="ECO:0007669"/>
    <property type="project" value="UniProtKB-UniPathway"/>
</dbReference>
<dbReference type="CDD" id="cd13972">
    <property type="entry name" value="UbiB"/>
    <property type="match status" value="1"/>
</dbReference>
<dbReference type="HAMAP" id="MF_00414">
    <property type="entry name" value="UbiB"/>
    <property type="match status" value="1"/>
</dbReference>
<dbReference type="InterPro" id="IPR004147">
    <property type="entry name" value="ABC1_dom"/>
</dbReference>
<dbReference type="InterPro" id="IPR011009">
    <property type="entry name" value="Kinase-like_dom_sf"/>
</dbReference>
<dbReference type="InterPro" id="IPR010232">
    <property type="entry name" value="UbiB"/>
</dbReference>
<dbReference type="InterPro" id="IPR045308">
    <property type="entry name" value="UbiB_bact"/>
</dbReference>
<dbReference type="InterPro" id="IPR050154">
    <property type="entry name" value="UbiB_kinase"/>
</dbReference>
<dbReference type="NCBIfam" id="NF003404">
    <property type="entry name" value="PRK04750.1"/>
    <property type="match status" value="1"/>
</dbReference>
<dbReference type="NCBIfam" id="TIGR01982">
    <property type="entry name" value="UbiB"/>
    <property type="match status" value="1"/>
</dbReference>
<dbReference type="PANTHER" id="PTHR10566">
    <property type="entry name" value="CHAPERONE-ACTIVITY OF BC1 COMPLEX CABC1 -RELATED"/>
    <property type="match status" value="1"/>
</dbReference>
<dbReference type="PANTHER" id="PTHR10566:SF113">
    <property type="entry name" value="PROTEIN ACTIVITY OF BC1 COMPLEX KINASE 7, CHLOROPLASTIC"/>
    <property type="match status" value="1"/>
</dbReference>
<dbReference type="Pfam" id="PF03109">
    <property type="entry name" value="ABC1"/>
    <property type="match status" value="1"/>
</dbReference>
<dbReference type="SUPFAM" id="SSF56112">
    <property type="entry name" value="Protein kinase-like (PK-like)"/>
    <property type="match status" value="1"/>
</dbReference>